<organism>
    <name type="scientific">Macaca mulatta</name>
    <name type="common">Rhesus macaque</name>
    <dbReference type="NCBI Taxonomy" id="9544"/>
    <lineage>
        <taxon>Eukaryota</taxon>
        <taxon>Metazoa</taxon>
        <taxon>Chordata</taxon>
        <taxon>Craniata</taxon>
        <taxon>Vertebrata</taxon>
        <taxon>Euteleostomi</taxon>
        <taxon>Mammalia</taxon>
        <taxon>Eutheria</taxon>
        <taxon>Euarchontoglires</taxon>
        <taxon>Primates</taxon>
        <taxon>Haplorrhini</taxon>
        <taxon>Catarrhini</taxon>
        <taxon>Cercopithecidae</taxon>
        <taxon>Cercopithecinae</taxon>
        <taxon>Macaca</taxon>
    </lineage>
</organism>
<comment type="function">
    <text evidence="4">Has antibacterial activity.</text>
</comment>
<comment type="subcellular location">
    <subcellularLocation>
        <location evidence="4">Secreted</location>
    </subcellularLocation>
</comment>
<comment type="tissue specificity">
    <text evidence="3">Abundant expression in the male reproductive tract only. Expressed abundantly in testis, while expression in epididymis decreased gradually from caput to cauda.</text>
</comment>
<comment type="similarity">
    <text evidence="4">Belongs to the beta-defensin family.</text>
</comment>
<proteinExistence type="evidence at transcript level"/>
<reference key="1">
    <citation type="journal article" date="2005" name="Genes Immun.">
        <title>Identification, characterization, and evolution of a primate beta-defensin gene cluster.</title>
        <authorList>
            <person name="Radhakrishnan Y."/>
            <person name="Hamil K.G."/>
            <person name="Yenugu S."/>
            <person name="Young S.L."/>
            <person name="French F.S."/>
            <person name="Hall S.H."/>
        </authorList>
    </citation>
    <scope>NUCLEOTIDE SEQUENCE [MRNA]</scope>
    <scope>TISSUE SPECIFICITY</scope>
    <source>
        <tissue>Testis</tissue>
    </source>
</reference>
<accession>Q5J5D0</accession>
<sequence length="67" mass="8051">MKLLLLTLTVLLLLSQLTPGGTQRCWNLYGKCRHRCSKKERVYVYCLNNKMCCVKPKYQPKEKWWPF</sequence>
<evidence type="ECO:0000250" key="1"/>
<evidence type="ECO:0000255" key="2"/>
<evidence type="ECO:0000269" key="3">
    <source>
    </source>
</evidence>
<evidence type="ECO:0000305" key="4"/>
<name>DB123_MACMU</name>
<dbReference type="EMBL" id="AY500998">
    <property type="protein sequence ID" value="AAS87293.1"/>
    <property type="molecule type" value="mRNA"/>
</dbReference>
<dbReference type="RefSeq" id="NP_001029367.1">
    <property type="nucleotide sequence ID" value="NM_001034195.1"/>
</dbReference>
<dbReference type="SMR" id="Q5J5D0"/>
<dbReference type="STRING" id="9544.ENSMMUP00000058082"/>
<dbReference type="PaxDb" id="9544-ENSMMUP00000006778"/>
<dbReference type="Ensembl" id="ENSMMUT00000078866.2">
    <property type="protein sequence ID" value="ENSMMUP00000058082.1"/>
    <property type="gene ID" value="ENSMMUG00000046141.2"/>
</dbReference>
<dbReference type="GeneID" id="619504"/>
<dbReference type="KEGG" id="mcc:619504"/>
<dbReference type="CTD" id="245936"/>
<dbReference type="VEuPathDB" id="HostDB:ENSMMUG00000046141"/>
<dbReference type="eggNOG" id="ENOG502TIGY">
    <property type="taxonomic scope" value="Eukaryota"/>
</dbReference>
<dbReference type="GeneTree" id="ENSGT00940000162385"/>
<dbReference type="HOGENOM" id="CLU_181906_2_0_1"/>
<dbReference type="InParanoid" id="Q5J5D0"/>
<dbReference type="OMA" id="RCWNLHG"/>
<dbReference type="OrthoDB" id="9827959at2759"/>
<dbReference type="Proteomes" id="UP000006718">
    <property type="component" value="Chromosome 10"/>
</dbReference>
<dbReference type="Bgee" id="ENSMMUG00000046141">
    <property type="expression patterns" value="Expressed in testis and 3 other cell types or tissues"/>
</dbReference>
<dbReference type="ExpressionAtlas" id="Q5J5D0">
    <property type="expression patterns" value="baseline"/>
</dbReference>
<dbReference type="GO" id="GO:0005576">
    <property type="term" value="C:extracellular region"/>
    <property type="evidence" value="ECO:0007669"/>
    <property type="project" value="UniProtKB-SubCell"/>
</dbReference>
<dbReference type="GO" id="GO:0042742">
    <property type="term" value="P:defense response to bacterium"/>
    <property type="evidence" value="ECO:0007669"/>
    <property type="project" value="UniProtKB-KW"/>
</dbReference>
<dbReference type="GO" id="GO:0045087">
    <property type="term" value="P:innate immune response"/>
    <property type="evidence" value="ECO:0007669"/>
    <property type="project" value="InterPro"/>
</dbReference>
<dbReference type="Gene3D" id="3.10.360.10">
    <property type="entry name" value="Antimicrobial Peptide, Beta-defensin 2, Chain A"/>
    <property type="match status" value="1"/>
</dbReference>
<dbReference type="InterPro" id="IPR050544">
    <property type="entry name" value="Beta-defensin"/>
</dbReference>
<dbReference type="InterPro" id="IPR025933">
    <property type="entry name" value="Beta_defensin_dom"/>
</dbReference>
<dbReference type="PANTHER" id="PTHR15001:SF3">
    <property type="entry name" value="BETA-DEFENSIN 123"/>
    <property type="match status" value="1"/>
</dbReference>
<dbReference type="PANTHER" id="PTHR15001">
    <property type="entry name" value="BETA-DEFENSIN 123-RELATED"/>
    <property type="match status" value="1"/>
</dbReference>
<dbReference type="Pfam" id="PF13841">
    <property type="entry name" value="Defensin_beta_2"/>
    <property type="match status" value="1"/>
</dbReference>
<feature type="signal peptide" evidence="2">
    <location>
        <begin position="1"/>
        <end position="20"/>
    </location>
</feature>
<feature type="peptide" id="PRO_0000006995" description="Beta-defensin 123">
    <location>
        <begin position="21"/>
        <end position="67"/>
    </location>
</feature>
<feature type="disulfide bond" evidence="1">
    <location>
        <begin position="25"/>
        <end position="52"/>
    </location>
</feature>
<feature type="disulfide bond" evidence="1">
    <location>
        <begin position="32"/>
        <end position="46"/>
    </location>
</feature>
<feature type="disulfide bond" evidence="1">
    <location>
        <begin position="36"/>
        <end position="53"/>
    </location>
</feature>
<keyword id="KW-0044">Antibiotic</keyword>
<keyword id="KW-0929">Antimicrobial</keyword>
<keyword id="KW-0211">Defensin</keyword>
<keyword id="KW-1015">Disulfide bond</keyword>
<keyword id="KW-1185">Reference proteome</keyword>
<keyword id="KW-0964">Secreted</keyword>
<keyword id="KW-0732">Signal</keyword>
<protein>
    <recommendedName>
        <fullName>Beta-defensin 123</fullName>
    </recommendedName>
    <alternativeName>
        <fullName>Defensin, beta 123</fullName>
    </alternativeName>
</protein>
<gene>
    <name type="primary">DEFB123</name>
</gene>